<proteinExistence type="inferred from homology"/>
<feature type="chain" id="PRO_0000409207" description="Spindle pole body component SPC42">
    <location>
        <begin position="1"/>
        <end position="314"/>
    </location>
</feature>
<feature type="region of interest" description="Disordered" evidence="3">
    <location>
        <begin position="154"/>
        <end position="186"/>
    </location>
</feature>
<feature type="region of interest" description="Disordered" evidence="3">
    <location>
        <begin position="288"/>
        <end position="314"/>
    </location>
</feature>
<feature type="coiled-coil region" evidence="2">
    <location>
        <begin position="52"/>
        <end position="109"/>
    </location>
</feature>
<feature type="coiled-coil region" evidence="2">
    <location>
        <begin position="184"/>
        <end position="215"/>
    </location>
</feature>
<feature type="compositionally biased region" description="Low complexity" evidence="3">
    <location>
        <begin position="168"/>
        <end position="178"/>
    </location>
</feature>
<organism>
    <name type="scientific">Eremothecium gossypii (strain ATCC 10895 / CBS 109.51 / FGSC 9923 / NRRL Y-1056)</name>
    <name type="common">Yeast</name>
    <name type="synonym">Ashbya gossypii</name>
    <dbReference type="NCBI Taxonomy" id="284811"/>
    <lineage>
        <taxon>Eukaryota</taxon>
        <taxon>Fungi</taxon>
        <taxon>Dikarya</taxon>
        <taxon>Ascomycota</taxon>
        <taxon>Saccharomycotina</taxon>
        <taxon>Saccharomycetes</taxon>
        <taxon>Saccharomycetales</taxon>
        <taxon>Saccharomycetaceae</taxon>
        <taxon>Eremothecium</taxon>
    </lineage>
</organism>
<name>SPC42_EREGS</name>
<evidence type="ECO:0000250" key="1"/>
<evidence type="ECO:0000255" key="2"/>
<evidence type="ECO:0000256" key="3">
    <source>
        <dbReference type="SAM" id="MobiDB-lite"/>
    </source>
</evidence>
<evidence type="ECO:0000305" key="4"/>
<keyword id="KW-0175">Coiled coil</keyword>
<keyword id="KW-0963">Cytoplasm</keyword>
<keyword id="KW-0206">Cytoskeleton</keyword>
<keyword id="KW-0539">Nucleus</keyword>
<keyword id="KW-1185">Reference proteome</keyword>
<reference key="1">
    <citation type="journal article" date="2004" name="Science">
        <title>The Ashbya gossypii genome as a tool for mapping the ancient Saccharomyces cerevisiae genome.</title>
        <authorList>
            <person name="Dietrich F.S."/>
            <person name="Voegeli S."/>
            <person name="Brachat S."/>
            <person name="Lerch A."/>
            <person name="Gates K."/>
            <person name="Steiner S."/>
            <person name="Mohr C."/>
            <person name="Poehlmann R."/>
            <person name="Luedi P."/>
            <person name="Choi S."/>
            <person name="Wing R.A."/>
            <person name="Flavier A."/>
            <person name="Gaffney T.D."/>
            <person name="Philippsen P."/>
        </authorList>
    </citation>
    <scope>NUCLEOTIDE SEQUENCE [LARGE SCALE GENOMIC DNA]</scope>
    <source>
        <strain>ATCC 10895 / CBS 109.51 / FGSC 9923 / NRRL Y-1056</strain>
    </source>
</reference>
<reference key="2">
    <citation type="journal article" date="2013" name="G3 (Bethesda)">
        <title>Genomes of Ashbya fungi isolated from insects reveal four mating-type loci, numerous translocations, lack of transposons, and distinct gene duplications.</title>
        <authorList>
            <person name="Dietrich F.S."/>
            <person name="Voegeli S."/>
            <person name="Kuo S."/>
            <person name="Philippsen P."/>
        </authorList>
    </citation>
    <scope>GENOME REANNOTATION</scope>
    <source>
        <strain>ATCC 10895 / CBS 109.51 / FGSC 9923 / NRRL Y-1056</strain>
    </source>
</reference>
<dbReference type="EMBL" id="AE016815">
    <property type="protein sequence ID" value="AAS50824.1"/>
    <property type="molecule type" value="Genomic_DNA"/>
</dbReference>
<dbReference type="RefSeq" id="NP_983000.1">
    <property type="nucleotide sequence ID" value="NM_208353.1"/>
</dbReference>
<dbReference type="SMR" id="Q75DH2"/>
<dbReference type="FunCoup" id="Q75DH2">
    <property type="interactions" value="207"/>
</dbReference>
<dbReference type="STRING" id="284811.Q75DH2"/>
<dbReference type="EnsemblFungi" id="AAS50824">
    <property type="protein sequence ID" value="AAS50824"/>
    <property type="gene ID" value="AGOS_ABR054C"/>
</dbReference>
<dbReference type="GeneID" id="4619104"/>
<dbReference type="KEGG" id="ago:AGOS_ABR054C"/>
<dbReference type="eggNOG" id="ENOG502RYX7">
    <property type="taxonomic scope" value="Eukaryota"/>
</dbReference>
<dbReference type="HOGENOM" id="CLU_056211_0_0_1"/>
<dbReference type="InParanoid" id="Q75DH2"/>
<dbReference type="OMA" id="HNHATHR"/>
<dbReference type="OrthoDB" id="4061426at2759"/>
<dbReference type="Proteomes" id="UP000000591">
    <property type="component" value="Chromosome II"/>
</dbReference>
<dbReference type="GO" id="GO:0005737">
    <property type="term" value="C:cytoplasm"/>
    <property type="evidence" value="ECO:0007669"/>
    <property type="project" value="UniProtKB-KW"/>
</dbReference>
<dbReference type="GO" id="GO:0005634">
    <property type="term" value="C:nucleus"/>
    <property type="evidence" value="ECO:0007669"/>
    <property type="project" value="UniProtKB-SubCell"/>
</dbReference>
<dbReference type="GO" id="GO:0005816">
    <property type="term" value="C:spindle pole body"/>
    <property type="evidence" value="ECO:0007669"/>
    <property type="project" value="UniProtKB-SubCell"/>
</dbReference>
<dbReference type="InterPro" id="IPR021611">
    <property type="entry name" value="Spc42"/>
</dbReference>
<dbReference type="Pfam" id="PF11544">
    <property type="entry name" value="Spc42p"/>
    <property type="match status" value="1"/>
</dbReference>
<gene>
    <name type="primary">SPC42</name>
    <name type="ordered locus">ABR054C</name>
</gene>
<sequence length="314" mass="34989">MNISPTPKRYQSSNHMPRAVNHNYHSAVPAYHEHAAGQNADRIVPDEYKINSNMISSLIKQNKDLLAKLDEKDRELEKLNVLVGSLRGKLIKYTELNKKLQAQAQAARVPSPPEPAAEPAADYLQLPRRAPAAENDKKIGELYDKLEQLTKVVHQQHLHDPPAPARPRSPARSRSPARTAVSDDDIMISESSELKRLEEQVDQLKRKVLIKSENELRKLSLNQQLADLMHKLGVSSSSPASSALLFDRQPSPTSAASSAPLAHAHCEQCHHAEDALKKPAMDIKNALQTPTPSRTRRDAHPHTHTTHHATNALW</sequence>
<accession>Q75DH2</accession>
<comment type="function">
    <text evidence="1">Forms a polymeric layer at the periphery of the spindle pole body (SPB) central plaque which has an essential function during SPB duplication and may facilitate attachment of the SPB to the nuclear membrane.</text>
</comment>
<comment type="subcellular location">
    <subcellularLocation>
        <location evidence="1">Nucleus</location>
    </subcellularLocation>
    <subcellularLocation>
        <location evidence="1">Cytoplasm</location>
        <location evidence="1">Cytoskeleton</location>
        <location evidence="1">Microtubule organizing center</location>
        <location evidence="1">Spindle pole body</location>
    </subcellularLocation>
</comment>
<comment type="similarity">
    <text evidence="4">Belongs to the SPC42 family.</text>
</comment>
<protein>
    <recommendedName>
        <fullName>Spindle pole body component SPC42</fullName>
    </recommendedName>
</protein>